<proteinExistence type="inferred from homology"/>
<protein>
    <recommendedName>
        <fullName evidence="1">NADH-ubiquinone oxidoreductase chain 2</fullName>
        <ecNumber evidence="1">7.1.1.2</ecNumber>
    </recommendedName>
    <alternativeName>
        <fullName>NADH dehydrogenase subunit 2</fullName>
    </alternativeName>
</protein>
<feature type="chain" id="PRO_0000269894" description="NADH-ubiquinone oxidoreductase chain 2">
    <location>
        <begin position="1"/>
        <end position="347"/>
    </location>
</feature>
<feature type="transmembrane region" description="Helical" evidence="3">
    <location>
        <begin position="3"/>
        <end position="23"/>
    </location>
</feature>
<feature type="transmembrane region" description="Helical" evidence="3">
    <location>
        <begin position="25"/>
        <end position="45"/>
    </location>
</feature>
<feature type="transmembrane region" description="Helical" evidence="3">
    <location>
        <begin position="66"/>
        <end position="86"/>
    </location>
</feature>
<feature type="transmembrane region" description="Helical" evidence="3">
    <location>
        <begin position="93"/>
        <end position="115"/>
    </location>
</feature>
<feature type="transmembrane region" description="Helical" evidence="3">
    <location>
        <begin position="149"/>
        <end position="169"/>
    </location>
</feature>
<feature type="transmembrane region" description="Helical" evidence="3">
    <location>
        <begin position="178"/>
        <end position="198"/>
    </location>
</feature>
<feature type="transmembrane region" description="Helical" evidence="3">
    <location>
        <begin position="201"/>
        <end position="221"/>
    </location>
</feature>
<feature type="transmembrane region" description="Helical" evidence="3">
    <location>
        <begin position="237"/>
        <end position="257"/>
    </location>
</feature>
<feature type="transmembrane region" description="Helical" evidence="3">
    <location>
        <begin position="274"/>
        <end position="294"/>
    </location>
</feature>
<feature type="transmembrane region" description="Helical" evidence="3">
    <location>
        <begin position="325"/>
        <end position="345"/>
    </location>
</feature>
<feature type="sequence variant" evidence="4 5">
    <original>L</original>
    <variation>F</variation>
    <location>
        <position position="6"/>
    </location>
</feature>
<feature type="sequence variant" evidence="5">
    <original>I</original>
    <variation>V</variation>
    <location>
        <position position="29"/>
    </location>
</feature>
<feature type="sequence variant" evidence="5">
    <original>V</original>
    <variation>I</variation>
    <location>
        <position position="122"/>
    </location>
</feature>
<feature type="sequence variant" evidence="5">
    <original>V</original>
    <variation>I</variation>
    <location>
        <position position="162"/>
    </location>
</feature>
<feature type="sequence variant" evidence="5">
    <original>T</original>
    <variation>A</variation>
    <location>
        <position position="195"/>
    </location>
</feature>
<feature type="sequence variant" evidence="5">
    <original>V</original>
    <variation>I</variation>
    <location>
        <position position="345"/>
    </location>
</feature>
<geneLocation type="mitochondrion"/>
<name>NU2M_CANLU</name>
<reference key="1">
    <citation type="journal article" date="2003" name="Nature">
        <title>Single origin of Malagasy Carnivora from an African ancestor.</title>
        <authorList>
            <person name="Yoder A.D."/>
            <person name="Burns M.M."/>
            <person name="Zehr S."/>
            <person name="Delefosse T."/>
            <person name="Veron G."/>
            <person name="Goodman S.M."/>
            <person name="Flynn J.J."/>
        </authorList>
    </citation>
    <scope>NUCLEOTIDE SEQUENCE [GENOMIC DNA]</scope>
</reference>
<reference key="2">
    <citation type="journal article" date="2005" name="Mol. Phylogenet. Evol.">
        <title>A phylogeny of the Caniformia (order Carnivora) based on 12 complete protein-coding mitochondrial genes.</title>
        <authorList>
            <person name="Delisle I."/>
            <person name="Strobeck C."/>
        </authorList>
    </citation>
    <scope>NUCLEOTIDE SEQUENCE [GENOMIC DNA]</scope>
    <scope>VARIANT PHE-6</scope>
</reference>
<reference key="3">
    <citation type="journal article" date="2006" name="Genome Res.">
        <title>Relaxation of selective constraint on dog mitochondrial DNA following domestication.</title>
        <authorList>
            <person name="Bjornerfeldt S."/>
            <person name="Webster M.T."/>
            <person name="Vila C."/>
        </authorList>
    </citation>
    <scope>NUCLEOTIDE SEQUENCE [GENOMIC DNA]</scope>
    <scope>VARIANTS PHE-6; VAL-29; ILE-122; ILE-162; ALA-195 AND ILE-345</scope>
</reference>
<keyword id="KW-0249">Electron transport</keyword>
<keyword id="KW-0472">Membrane</keyword>
<keyword id="KW-0496">Mitochondrion</keyword>
<keyword id="KW-0999">Mitochondrion inner membrane</keyword>
<keyword id="KW-0520">NAD</keyword>
<keyword id="KW-0679">Respiratory chain</keyword>
<keyword id="KW-1278">Translocase</keyword>
<keyword id="KW-0812">Transmembrane</keyword>
<keyword id="KW-1133">Transmembrane helix</keyword>
<keyword id="KW-0813">Transport</keyword>
<keyword id="KW-0830">Ubiquinone</keyword>
<comment type="function">
    <text evidence="1">Core subunit of the mitochondrial membrane respiratory chain NADH dehydrogenase (Complex I) which catalyzes electron transfer from NADH through the respiratory chain, using ubiquinone as an electron acceptor. Essential for the catalytic activity and assembly of complex I.</text>
</comment>
<comment type="catalytic activity">
    <reaction evidence="1">
        <text>a ubiquinone + NADH + 5 H(+)(in) = a ubiquinol + NAD(+) + 4 H(+)(out)</text>
        <dbReference type="Rhea" id="RHEA:29091"/>
        <dbReference type="Rhea" id="RHEA-COMP:9565"/>
        <dbReference type="Rhea" id="RHEA-COMP:9566"/>
        <dbReference type="ChEBI" id="CHEBI:15378"/>
        <dbReference type="ChEBI" id="CHEBI:16389"/>
        <dbReference type="ChEBI" id="CHEBI:17976"/>
        <dbReference type="ChEBI" id="CHEBI:57540"/>
        <dbReference type="ChEBI" id="CHEBI:57945"/>
        <dbReference type="EC" id="7.1.1.2"/>
    </reaction>
</comment>
<comment type="subunit">
    <text evidence="1 2">Core subunit of respiratory chain NADH dehydrogenase (Complex I) which is composed of 45 different subunits. Interacts with TMEM242 (By similarity).</text>
</comment>
<comment type="subcellular location">
    <subcellularLocation>
        <location evidence="2">Mitochondrion inner membrane</location>
        <topology evidence="3">Multi-pass membrane protein</topology>
    </subcellularLocation>
</comment>
<comment type="similarity">
    <text evidence="6">Belongs to the complex I subunit 2 family.</text>
</comment>
<organism>
    <name type="scientific">Canis lupus</name>
    <name type="common">Gray wolf</name>
    <dbReference type="NCBI Taxonomy" id="9612"/>
    <lineage>
        <taxon>Eukaryota</taxon>
        <taxon>Metazoa</taxon>
        <taxon>Chordata</taxon>
        <taxon>Craniata</taxon>
        <taxon>Vertebrata</taxon>
        <taxon>Euteleostomi</taxon>
        <taxon>Mammalia</taxon>
        <taxon>Eutheria</taxon>
        <taxon>Laurasiatheria</taxon>
        <taxon>Carnivora</taxon>
        <taxon>Caniformia</taxon>
        <taxon>Canidae</taxon>
        <taxon>Canis</taxon>
    </lineage>
</organism>
<sequence length="347" mass="39102">MKPPILIIIMATIMTGTMIVMLSSHWLLIWIGFEMNMLAIIPILMKKYNPRAMEASTKYFLTQATASMLLMMGVTINLLYSGQWVISKISNPIASIMMTTALTMKLGLSPFHFWVPEVTQGVTLMSGMILLTWQKIAPMSILYQISPSINTNLLMLMALTSVLVGGWGGLNQTQLRKIMAYSSIAHMGWMAAIITYNPTMMILNLTLYILMTLSTFMLFMLNSSTTTLSLSHMWNKFPLITSMILILMLSLGGLPPLSGFIPKWMIIQELTKNNMIIIPTLMAITALLNLYFYLRLTYSTALTMFPSTNNMKMKWQFEYTKKATLLPPLIITSTMLLPLTPMLSVLD</sequence>
<accession>Q85PR2</accession>
<accession>Q1HK89</accession>
<accession>Q1HKA2</accession>
<accession>Q1HKB5</accession>
<accession>Q1HKF4</accession>
<accession>Q3L6Y7</accession>
<evidence type="ECO:0000250" key="1">
    <source>
        <dbReference type="UniProtKB" id="P03891"/>
    </source>
</evidence>
<evidence type="ECO:0000250" key="2">
    <source>
        <dbReference type="UniProtKB" id="P03892"/>
    </source>
</evidence>
<evidence type="ECO:0000255" key="3"/>
<evidence type="ECO:0000269" key="4">
    <source>
    </source>
</evidence>
<evidence type="ECO:0000269" key="5">
    <source>
    </source>
</evidence>
<evidence type="ECO:0000305" key="6"/>
<dbReference type="EC" id="7.1.1.2" evidence="1"/>
<dbReference type="EMBL" id="AY170044">
    <property type="protein sequence ID" value="AAN84578.1"/>
    <property type="molecule type" value="Genomic_DNA"/>
</dbReference>
<dbReference type="EMBL" id="AY598501">
    <property type="protein sequence ID" value="AAU00447.1"/>
    <property type="molecule type" value="Genomic_DNA"/>
</dbReference>
<dbReference type="EMBL" id="DQ480503">
    <property type="protein sequence ID" value="ABE48156.1"/>
    <property type="molecule type" value="Genomic_DNA"/>
</dbReference>
<dbReference type="EMBL" id="DQ480504">
    <property type="protein sequence ID" value="ABE48169.1"/>
    <property type="molecule type" value="Genomic_DNA"/>
</dbReference>
<dbReference type="EMBL" id="DQ480505">
    <property type="protein sequence ID" value="ABE48182.1"/>
    <property type="molecule type" value="Genomic_DNA"/>
</dbReference>
<dbReference type="EMBL" id="DQ480506">
    <property type="protein sequence ID" value="ABE48195.1"/>
    <property type="molecule type" value="Genomic_DNA"/>
</dbReference>
<dbReference type="EMBL" id="DQ480507">
    <property type="protein sequence ID" value="ABE48208.1"/>
    <property type="molecule type" value="Genomic_DNA"/>
</dbReference>
<dbReference type="EMBL" id="DQ480508">
    <property type="protein sequence ID" value="ABE48221.1"/>
    <property type="molecule type" value="Genomic_DNA"/>
</dbReference>
<dbReference type="RefSeq" id="YP_626729.1">
    <property type="nucleotide sequence ID" value="NC_008092.1"/>
</dbReference>
<dbReference type="SMR" id="Q85PR2"/>
<dbReference type="GeneID" id="4097765"/>
<dbReference type="CTD" id="4536"/>
<dbReference type="GO" id="GO:0005743">
    <property type="term" value="C:mitochondrial inner membrane"/>
    <property type="evidence" value="ECO:0000250"/>
    <property type="project" value="UniProtKB"/>
</dbReference>
<dbReference type="GO" id="GO:0008137">
    <property type="term" value="F:NADH dehydrogenase (ubiquinone) activity"/>
    <property type="evidence" value="ECO:0000250"/>
    <property type="project" value="UniProtKB"/>
</dbReference>
<dbReference type="GO" id="GO:0006120">
    <property type="term" value="P:mitochondrial electron transport, NADH to ubiquinone"/>
    <property type="evidence" value="ECO:0000250"/>
    <property type="project" value="UniProtKB"/>
</dbReference>
<dbReference type="GO" id="GO:0032981">
    <property type="term" value="P:mitochondrial respiratory chain complex I assembly"/>
    <property type="evidence" value="ECO:0000250"/>
    <property type="project" value="UniProtKB"/>
</dbReference>
<dbReference type="InterPro" id="IPR050175">
    <property type="entry name" value="Complex_I_Subunit_2"/>
</dbReference>
<dbReference type="InterPro" id="IPR010933">
    <property type="entry name" value="NADH_DH_su2_C"/>
</dbReference>
<dbReference type="InterPro" id="IPR003917">
    <property type="entry name" value="NADH_UbQ_OxRdtase_chain2"/>
</dbReference>
<dbReference type="InterPro" id="IPR001750">
    <property type="entry name" value="ND/Mrp_TM"/>
</dbReference>
<dbReference type="PANTHER" id="PTHR46552">
    <property type="entry name" value="NADH-UBIQUINONE OXIDOREDUCTASE CHAIN 2"/>
    <property type="match status" value="1"/>
</dbReference>
<dbReference type="PANTHER" id="PTHR46552:SF1">
    <property type="entry name" value="NADH-UBIQUINONE OXIDOREDUCTASE CHAIN 2"/>
    <property type="match status" value="1"/>
</dbReference>
<dbReference type="Pfam" id="PF06444">
    <property type="entry name" value="NADH_dehy_S2_C"/>
    <property type="match status" value="1"/>
</dbReference>
<dbReference type="Pfam" id="PF00361">
    <property type="entry name" value="Proton_antipo_M"/>
    <property type="match status" value="1"/>
</dbReference>
<dbReference type="PRINTS" id="PR01436">
    <property type="entry name" value="NADHDHGNASE2"/>
</dbReference>
<gene>
    <name evidence="1" type="primary">MT-ND2</name>
    <name type="synonym">MTND2</name>
    <name type="synonym">NADH2</name>
    <name type="synonym">ND2</name>
</gene>